<organism>
    <name type="scientific">Mycoplasma genitalium (strain ATCC 33530 / DSM 19775 / NCTC 10195 / G37)</name>
    <name type="common">Mycoplasmoides genitalium</name>
    <dbReference type="NCBI Taxonomy" id="243273"/>
    <lineage>
        <taxon>Bacteria</taxon>
        <taxon>Bacillati</taxon>
        <taxon>Mycoplasmatota</taxon>
        <taxon>Mycoplasmoidales</taxon>
        <taxon>Mycoplasmoidaceae</taxon>
        <taxon>Mycoplasmoides</taxon>
    </lineage>
</organism>
<feature type="chain" id="PRO_0000060412" description="tRNA (guanine-N(1)-)-methyltransferase">
    <location>
        <begin position="1"/>
        <end position="231"/>
    </location>
</feature>
<feature type="binding site" evidence="1">
    <location>
        <position position="110"/>
    </location>
    <ligand>
        <name>S-adenosyl-L-methionine</name>
        <dbReference type="ChEBI" id="CHEBI:59789"/>
    </ligand>
</feature>
<feature type="binding site" evidence="1">
    <location>
        <begin position="129"/>
        <end position="134"/>
    </location>
    <ligand>
        <name>S-adenosyl-L-methionine</name>
        <dbReference type="ChEBI" id="CHEBI:59789"/>
    </ligand>
</feature>
<evidence type="ECO:0000250" key="1"/>
<evidence type="ECO:0000305" key="2"/>
<proteinExistence type="inferred from homology"/>
<protein>
    <recommendedName>
        <fullName>tRNA (guanine-N(1)-)-methyltransferase</fullName>
        <ecNumber>2.1.1.228</ecNumber>
    </recommendedName>
    <alternativeName>
        <fullName>M1G-methyltransferase</fullName>
    </alternativeName>
    <alternativeName>
        <fullName>tRNA [GM37] methyltransferase</fullName>
    </alternativeName>
</protein>
<dbReference type="EC" id="2.1.1.228"/>
<dbReference type="EMBL" id="L43967">
    <property type="protein sequence ID" value="AAC72465.1"/>
    <property type="molecule type" value="Genomic_DNA"/>
</dbReference>
<dbReference type="PIR" id="B64249">
    <property type="entry name" value="B64249"/>
</dbReference>
<dbReference type="RefSeq" id="WP_010869485.1">
    <property type="nucleotide sequence ID" value="NC_000908.2"/>
</dbReference>
<dbReference type="SMR" id="P47683"/>
<dbReference type="FunCoup" id="P47683">
    <property type="interactions" value="154"/>
</dbReference>
<dbReference type="STRING" id="243273.MG_445"/>
<dbReference type="GeneID" id="88282625"/>
<dbReference type="KEGG" id="mge:MG_445"/>
<dbReference type="eggNOG" id="COG0336">
    <property type="taxonomic scope" value="Bacteria"/>
</dbReference>
<dbReference type="HOGENOM" id="CLU_047363_0_1_14"/>
<dbReference type="InParanoid" id="P47683"/>
<dbReference type="BioCyc" id="MGEN243273:G1GJ2-538-MONOMER"/>
<dbReference type="Proteomes" id="UP000000807">
    <property type="component" value="Chromosome"/>
</dbReference>
<dbReference type="GO" id="GO:0005829">
    <property type="term" value="C:cytosol"/>
    <property type="evidence" value="ECO:0000318"/>
    <property type="project" value="GO_Central"/>
</dbReference>
<dbReference type="GO" id="GO:0052906">
    <property type="term" value="F:tRNA (guanine(37)-N1)-methyltransferase activity"/>
    <property type="evidence" value="ECO:0000318"/>
    <property type="project" value="GO_Central"/>
</dbReference>
<dbReference type="GO" id="GO:0002939">
    <property type="term" value="P:tRNA N1-guanine methylation"/>
    <property type="evidence" value="ECO:0000318"/>
    <property type="project" value="GO_Central"/>
</dbReference>
<dbReference type="CDD" id="cd18080">
    <property type="entry name" value="TrmD-like"/>
    <property type="match status" value="1"/>
</dbReference>
<dbReference type="FunFam" id="1.10.1270.20:FF:000005">
    <property type="entry name" value="tRNA (guanine-N(1)-)-methyltransferase"/>
    <property type="match status" value="1"/>
</dbReference>
<dbReference type="FunFam" id="3.40.1280.10:FF:000001">
    <property type="entry name" value="tRNA (guanine-N(1)-)-methyltransferase"/>
    <property type="match status" value="1"/>
</dbReference>
<dbReference type="Gene3D" id="3.40.1280.10">
    <property type="match status" value="1"/>
</dbReference>
<dbReference type="Gene3D" id="1.10.1270.20">
    <property type="entry name" value="tRNA(m1g37)methyltransferase, domain 2"/>
    <property type="match status" value="1"/>
</dbReference>
<dbReference type="HAMAP" id="MF_00605">
    <property type="entry name" value="TrmD"/>
    <property type="match status" value="1"/>
</dbReference>
<dbReference type="InterPro" id="IPR029028">
    <property type="entry name" value="Alpha/beta_knot_MTases"/>
</dbReference>
<dbReference type="InterPro" id="IPR023148">
    <property type="entry name" value="tRNA_m1G_MeTrfase_C_sf"/>
</dbReference>
<dbReference type="InterPro" id="IPR002649">
    <property type="entry name" value="tRNA_m1G_MeTrfase_TrmD"/>
</dbReference>
<dbReference type="InterPro" id="IPR029026">
    <property type="entry name" value="tRNA_m1G_MTases_N"/>
</dbReference>
<dbReference type="InterPro" id="IPR016009">
    <property type="entry name" value="tRNA_MeTrfase_TRMD/TRM10"/>
</dbReference>
<dbReference type="NCBIfam" id="NF000648">
    <property type="entry name" value="PRK00026.1"/>
    <property type="match status" value="1"/>
</dbReference>
<dbReference type="NCBIfam" id="TIGR00088">
    <property type="entry name" value="trmD"/>
    <property type="match status" value="1"/>
</dbReference>
<dbReference type="PANTHER" id="PTHR46417">
    <property type="entry name" value="TRNA (GUANINE-N(1)-)-METHYLTRANSFERASE"/>
    <property type="match status" value="1"/>
</dbReference>
<dbReference type="PANTHER" id="PTHR46417:SF1">
    <property type="entry name" value="TRNA (GUANINE-N(1)-)-METHYLTRANSFERASE"/>
    <property type="match status" value="1"/>
</dbReference>
<dbReference type="Pfam" id="PF01746">
    <property type="entry name" value="tRNA_m1G_MT"/>
    <property type="match status" value="1"/>
</dbReference>
<dbReference type="PIRSF" id="PIRSF000386">
    <property type="entry name" value="tRNA_mtase"/>
    <property type="match status" value="1"/>
</dbReference>
<dbReference type="SUPFAM" id="SSF75217">
    <property type="entry name" value="alpha/beta knot"/>
    <property type="match status" value="1"/>
</dbReference>
<comment type="function">
    <text evidence="1">Specifically methylates guanosine-37 in various tRNAs.</text>
</comment>
<comment type="catalytic activity">
    <reaction>
        <text>guanosine(37) in tRNA + S-adenosyl-L-methionine = N(1)-methylguanosine(37) in tRNA + S-adenosyl-L-homocysteine + H(+)</text>
        <dbReference type="Rhea" id="RHEA:36899"/>
        <dbReference type="Rhea" id="RHEA-COMP:10145"/>
        <dbReference type="Rhea" id="RHEA-COMP:10147"/>
        <dbReference type="ChEBI" id="CHEBI:15378"/>
        <dbReference type="ChEBI" id="CHEBI:57856"/>
        <dbReference type="ChEBI" id="CHEBI:59789"/>
        <dbReference type="ChEBI" id="CHEBI:73542"/>
        <dbReference type="ChEBI" id="CHEBI:74269"/>
        <dbReference type="EC" id="2.1.1.228"/>
    </reaction>
</comment>
<comment type="subunit">
    <text evidence="1">Homodimer.</text>
</comment>
<comment type="subcellular location">
    <subcellularLocation>
        <location evidence="2">Cytoplasm</location>
    </subcellularLocation>
</comment>
<comment type="similarity">
    <text evidence="2">Belongs to the RNA methyltransferase TrmD family.</text>
</comment>
<name>TRMD_MYCGE</name>
<keyword id="KW-0963">Cytoplasm</keyword>
<keyword id="KW-0489">Methyltransferase</keyword>
<keyword id="KW-1185">Reference proteome</keyword>
<keyword id="KW-0949">S-adenosyl-L-methionine</keyword>
<keyword id="KW-0808">Transferase</keyword>
<keyword id="KW-0819">tRNA processing</keyword>
<accession>P47683</accession>
<reference key="1">
    <citation type="journal article" date="1995" name="Science">
        <title>The minimal gene complement of Mycoplasma genitalium.</title>
        <authorList>
            <person name="Fraser C.M."/>
            <person name="Gocayne J.D."/>
            <person name="White O."/>
            <person name="Adams M.D."/>
            <person name="Clayton R.A."/>
            <person name="Fleischmann R.D."/>
            <person name="Bult C.J."/>
            <person name="Kerlavage A.R."/>
            <person name="Sutton G.G."/>
            <person name="Kelley J.M."/>
            <person name="Fritchman J.L."/>
            <person name="Weidman J.F."/>
            <person name="Small K.V."/>
            <person name="Sandusky M."/>
            <person name="Fuhrmann J.L."/>
            <person name="Nguyen D.T."/>
            <person name="Utterback T.R."/>
            <person name="Saudek D.M."/>
            <person name="Phillips C.A."/>
            <person name="Merrick J.M."/>
            <person name="Tomb J.-F."/>
            <person name="Dougherty B.A."/>
            <person name="Bott K.F."/>
            <person name="Hu P.-C."/>
            <person name="Lucier T.S."/>
            <person name="Peterson S.N."/>
            <person name="Smith H.O."/>
            <person name="Hutchison C.A. III"/>
            <person name="Venter J.C."/>
        </authorList>
    </citation>
    <scope>NUCLEOTIDE SEQUENCE [LARGE SCALE GENOMIC DNA]</scope>
    <source>
        <strain>ATCC 33530 / DSM 19775 / NCTC 10195 / G37</strain>
    </source>
</reference>
<sequence length="231" mass="26478">MKITVLTLFENTIWPYLNSSIMLQAQKANLVQFEVVNWRNFCNDKHKTVDDMAYGGGSGMVLKAEPIINCLNFYKAPNSHVVLLSPEGEQFSQNCAKKLTKYEHLILLSGHYEGFDQRIYKYIDQIVSLGDFVLSGGELVALSVIDATVRLIKGVINDQSLICESFNDNLLDFPVYTRPYDLKGDKVPEVLLSGDHQKIESFRKEQQILKTAKYRPDLYKKYLENKNEKNK</sequence>
<gene>
    <name type="primary">trmD</name>
    <name type="ordered locus">MG445</name>
</gene>